<accession>A4QJU6</accession>
<protein>
    <recommendedName>
        <fullName evidence="1">Photosystem II reaction center protein L</fullName>
        <shortName evidence="1">PSII-L</shortName>
    </recommendedName>
</protein>
<gene>
    <name evidence="1" type="primary">psbL</name>
</gene>
<comment type="function">
    <text evidence="1">One of the components of the core complex of photosystem II (PSII). PSII is a light-driven water:plastoquinone oxidoreductase that uses light energy to abstract electrons from H(2)O, generating O(2) and a proton gradient subsequently used for ATP formation. It consists of a core antenna complex that captures photons, and an electron transfer chain that converts photonic excitation into a charge separation. This subunit is found at the monomer-monomer interface and is required for correct PSII assembly and/or dimerization.</text>
</comment>
<comment type="subunit">
    <text evidence="1">PSII is composed of 1 copy each of membrane proteins PsbA, PsbB, PsbC, PsbD, PsbE, PsbF, PsbH, PsbI, PsbJ, PsbK, PsbL, PsbM, PsbT, PsbX, PsbY, PsbZ, Psb30/Ycf12, at least 3 peripheral proteins of the oxygen-evolving complex and a large number of cofactors. It forms dimeric complexes.</text>
</comment>
<comment type="subcellular location">
    <subcellularLocation>
        <location evidence="1">Plastid</location>
        <location evidence="1">Chloroplast thylakoid membrane</location>
        <topology evidence="1">Single-pass membrane protein</topology>
    </subcellularLocation>
</comment>
<comment type="similarity">
    <text evidence="1">Belongs to the PsbL family.</text>
</comment>
<keyword id="KW-0150">Chloroplast</keyword>
<keyword id="KW-0472">Membrane</keyword>
<keyword id="KW-0602">Photosynthesis</keyword>
<keyword id="KW-0604">Photosystem II</keyword>
<keyword id="KW-0934">Plastid</keyword>
<keyword id="KW-0674">Reaction center</keyword>
<keyword id="KW-0793">Thylakoid</keyword>
<keyword id="KW-0812">Transmembrane</keyword>
<keyword id="KW-1133">Transmembrane helix</keyword>
<organism>
    <name type="scientific">Olimarabidopsis pumila</name>
    <name type="common">Dwarf rocket</name>
    <name type="synonym">Arabidopsis griffithiana</name>
    <dbReference type="NCBI Taxonomy" id="74718"/>
    <lineage>
        <taxon>Eukaryota</taxon>
        <taxon>Viridiplantae</taxon>
        <taxon>Streptophyta</taxon>
        <taxon>Embryophyta</taxon>
        <taxon>Tracheophyta</taxon>
        <taxon>Spermatophyta</taxon>
        <taxon>Magnoliopsida</taxon>
        <taxon>eudicotyledons</taxon>
        <taxon>Gunneridae</taxon>
        <taxon>Pentapetalae</taxon>
        <taxon>rosids</taxon>
        <taxon>malvids</taxon>
        <taxon>Brassicales</taxon>
        <taxon>Brassicaceae</taxon>
        <taxon>Alyssopsideae</taxon>
        <taxon>Olimarabidopsis</taxon>
    </lineage>
</organism>
<sequence length="38" mass="4470">MTQSNPNEQSVELNRTSLYWGLLLIFVLAVLFSNYFFN</sequence>
<proteinExistence type="inferred from homology"/>
<feature type="chain" id="PRO_0000306240" description="Photosystem II reaction center protein L">
    <location>
        <begin position="1"/>
        <end position="38"/>
    </location>
</feature>
<feature type="transmembrane region" description="Helical" evidence="1">
    <location>
        <begin position="17"/>
        <end position="37"/>
    </location>
</feature>
<geneLocation type="chloroplast"/>
<dbReference type="EMBL" id="AP009368">
    <property type="protein sequence ID" value="BAF49954.1"/>
    <property type="molecule type" value="Genomic_DNA"/>
</dbReference>
<dbReference type="RefSeq" id="YP_001123130.1">
    <property type="nucleotide sequence ID" value="NC_009267.1"/>
</dbReference>
<dbReference type="SMR" id="A4QJU6"/>
<dbReference type="GeneID" id="4962378"/>
<dbReference type="GO" id="GO:0009535">
    <property type="term" value="C:chloroplast thylakoid membrane"/>
    <property type="evidence" value="ECO:0007669"/>
    <property type="project" value="UniProtKB-SubCell"/>
</dbReference>
<dbReference type="GO" id="GO:0009539">
    <property type="term" value="C:photosystem II reaction center"/>
    <property type="evidence" value="ECO:0007669"/>
    <property type="project" value="InterPro"/>
</dbReference>
<dbReference type="GO" id="GO:0015979">
    <property type="term" value="P:photosynthesis"/>
    <property type="evidence" value="ECO:0007669"/>
    <property type="project" value="UniProtKB-UniRule"/>
</dbReference>
<dbReference type="HAMAP" id="MF_01317">
    <property type="entry name" value="PSII_PsbL"/>
    <property type="match status" value="1"/>
</dbReference>
<dbReference type="InterPro" id="IPR003372">
    <property type="entry name" value="PSII_PsbL"/>
</dbReference>
<dbReference type="InterPro" id="IPR037266">
    <property type="entry name" value="PSII_PsbL_sf"/>
</dbReference>
<dbReference type="NCBIfam" id="NF001972">
    <property type="entry name" value="PRK00753.1"/>
    <property type="match status" value="1"/>
</dbReference>
<dbReference type="Pfam" id="PF02419">
    <property type="entry name" value="PsbL"/>
    <property type="match status" value="1"/>
</dbReference>
<dbReference type="SUPFAM" id="SSF161017">
    <property type="entry name" value="Photosystem II reaction center protein L, PsbL"/>
    <property type="match status" value="1"/>
</dbReference>
<evidence type="ECO:0000255" key="1">
    <source>
        <dbReference type="HAMAP-Rule" id="MF_01317"/>
    </source>
</evidence>
<name>PSBL_OLIPU</name>
<reference key="1">
    <citation type="submission" date="2007-03" db="EMBL/GenBank/DDBJ databases">
        <title>Sequence analysis of Arabidopsis pumila JS2 chloroplast DNA.</title>
        <authorList>
            <person name="Hosouchi T."/>
            <person name="Tsuruoka H."/>
            <person name="Kotani H."/>
        </authorList>
    </citation>
    <scope>NUCLEOTIDE SEQUENCE [LARGE SCALE GENOMIC DNA]</scope>
</reference>